<proteinExistence type="evidence at protein level"/>
<protein>
    <recommendedName>
        <fullName>Bone morphogenetic protein 4</fullName>
        <shortName>BMP-4</shortName>
    </recommendedName>
</protein>
<dbReference type="EMBL" id="X75915">
    <property type="protein sequence ID" value="CAA53514.1"/>
    <property type="molecule type" value="mRNA"/>
</dbReference>
<dbReference type="PIR" id="I50608">
    <property type="entry name" value="I50608"/>
</dbReference>
<dbReference type="SMR" id="Q90752"/>
<dbReference type="FunCoup" id="Q90752">
    <property type="interactions" value="279"/>
</dbReference>
<dbReference type="STRING" id="9031.ENSGALP00000020289"/>
<dbReference type="GlyCosmos" id="Q90752">
    <property type="glycosylation" value="4 sites, No reported glycans"/>
</dbReference>
<dbReference type="GlyGen" id="Q90752">
    <property type="glycosylation" value="4 sites"/>
</dbReference>
<dbReference type="PaxDb" id="9031-ENSGALP00000020289"/>
<dbReference type="VEuPathDB" id="HostDB:geneid_396165"/>
<dbReference type="eggNOG" id="KOG3900">
    <property type="taxonomic scope" value="Eukaryota"/>
</dbReference>
<dbReference type="InParanoid" id="Q90752"/>
<dbReference type="OrthoDB" id="5987191at2759"/>
<dbReference type="PhylomeDB" id="Q90752"/>
<dbReference type="Proteomes" id="UP000000539">
    <property type="component" value="Unassembled WGS sequence"/>
</dbReference>
<dbReference type="GO" id="GO:0005615">
    <property type="term" value="C:extracellular space"/>
    <property type="evidence" value="ECO:0000318"/>
    <property type="project" value="GO_Central"/>
</dbReference>
<dbReference type="GO" id="GO:0005125">
    <property type="term" value="F:cytokine activity"/>
    <property type="evidence" value="ECO:0000318"/>
    <property type="project" value="GO_Central"/>
</dbReference>
<dbReference type="GO" id="GO:0008083">
    <property type="term" value="F:growth factor activity"/>
    <property type="evidence" value="ECO:0007669"/>
    <property type="project" value="UniProtKB-KW"/>
</dbReference>
<dbReference type="GO" id="GO:0071730">
    <property type="term" value="P:beak formation"/>
    <property type="evidence" value="ECO:0000315"/>
    <property type="project" value="AgBase"/>
</dbReference>
<dbReference type="GO" id="GO:0071729">
    <property type="term" value="P:beak morphogenesis"/>
    <property type="evidence" value="ECO:0000315"/>
    <property type="project" value="AgBase"/>
</dbReference>
<dbReference type="GO" id="GO:0051216">
    <property type="term" value="P:cartilage development"/>
    <property type="evidence" value="ECO:0007669"/>
    <property type="project" value="UniProtKB-KW"/>
</dbReference>
<dbReference type="GO" id="GO:0048704">
    <property type="term" value="P:embryonic skeletal system morphogenesis"/>
    <property type="evidence" value="ECO:0000315"/>
    <property type="project" value="AgBase"/>
</dbReference>
<dbReference type="GO" id="GO:0048392">
    <property type="term" value="P:intermediate mesodermal cell differentiation"/>
    <property type="evidence" value="ECO:0000303"/>
    <property type="project" value="AgBase"/>
</dbReference>
<dbReference type="GO" id="GO:0045892">
    <property type="term" value="P:negative regulation of DNA-templated transcription"/>
    <property type="evidence" value="ECO:0000303"/>
    <property type="project" value="AgBase"/>
</dbReference>
<dbReference type="GO" id="GO:0072179">
    <property type="term" value="P:nephric duct formation"/>
    <property type="evidence" value="ECO:0000315"/>
    <property type="project" value="AgBase"/>
</dbReference>
<dbReference type="GO" id="GO:0001503">
    <property type="term" value="P:ossification"/>
    <property type="evidence" value="ECO:0007669"/>
    <property type="project" value="UniProtKB-KW"/>
</dbReference>
<dbReference type="GO" id="GO:0009951">
    <property type="term" value="P:polarity specification of dorsal/ventral axis"/>
    <property type="evidence" value="ECO:0000303"/>
    <property type="project" value="AgBase"/>
</dbReference>
<dbReference type="GO" id="GO:0045893">
    <property type="term" value="P:positive regulation of DNA-templated transcription"/>
    <property type="evidence" value="ECO:0000315"/>
    <property type="project" value="AgBase"/>
</dbReference>
<dbReference type="GO" id="GO:0045606">
    <property type="term" value="P:positive regulation of epidermal cell differentiation"/>
    <property type="evidence" value="ECO:0000250"/>
    <property type="project" value="CAFA"/>
</dbReference>
<dbReference type="GO" id="GO:2000872">
    <property type="term" value="P:positive regulation of progesterone secretion"/>
    <property type="evidence" value="ECO:0000304"/>
    <property type="project" value="AgBase"/>
</dbReference>
<dbReference type="GO" id="GO:0010453">
    <property type="term" value="P:regulation of cell fate commitment"/>
    <property type="evidence" value="ECO:0000250"/>
    <property type="project" value="CAFA"/>
</dbReference>
<dbReference type="GO" id="GO:2000290">
    <property type="term" value="P:regulation of myotome development"/>
    <property type="evidence" value="ECO:0000303"/>
    <property type="project" value="AgBase"/>
</dbReference>
<dbReference type="CDD" id="cd19391">
    <property type="entry name" value="TGF_beta_BMP4_BMP2B"/>
    <property type="match status" value="1"/>
</dbReference>
<dbReference type="FunFam" id="2.10.90.10:FF:000103">
    <property type="entry name" value="Bone morphogenetic protein 16"/>
    <property type="match status" value="1"/>
</dbReference>
<dbReference type="FunFam" id="2.60.120.970:FF:000005">
    <property type="entry name" value="Bone morphogenetic protein 4"/>
    <property type="match status" value="1"/>
</dbReference>
<dbReference type="Gene3D" id="2.60.120.970">
    <property type="match status" value="1"/>
</dbReference>
<dbReference type="Gene3D" id="2.10.90.10">
    <property type="entry name" value="Cystine-knot cytokines"/>
    <property type="match status" value="1"/>
</dbReference>
<dbReference type="InterPro" id="IPR047833">
    <property type="entry name" value="BMP4_TGF_beta-like"/>
</dbReference>
<dbReference type="InterPro" id="IPR029034">
    <property type="entry name" value="Cystine-knot_cytokine"/>
</dbReference>
<dbReference type="InterPro" id="IPR001839">
    <property type="entry name" value="TGF-b_C"/>
</dbReference>
<dbReference type="InterPro" id="IPR001111">
    <property type="entry name" value="TGF-b_propeptide"/>
</dbReference>
<dbReference type="InterPro" id="IPR015615">
    <property type="entry name" value="TGF-beta-rel"/>
</dbReference>
<dbReference type="InterPro" id="IPR017948">
    <property type="entry name" value="TGFb_CS"/>
</dbReference>
<dbReference type="PANTHER" id="PTHR11848:SF165">
    <property type="entry name" value="BONE MORPHOGENETIC PROTEIN 4"/>
    <property type="match status" value="1"/>
</dbReference>
<dbReference type="PANTHER" id="PTHR11848">
    <property type="entry name" value="TGF-BETA FAMILY"/>
    <property type="match status" value="1"/>
</dbReference>
<dbReference type="Pfam" id="PF00019">
    <property type="entry name" value="TGF_beta"/>
    <property type="match status" value="1"/>
</dbReference>
<dbReference type="Pfam" id="PF00688">
    <property type="entry name" value="TGFb_propeptide"/>
    <property type="match status" value="1"/>
</dbReference>
<dbReference type="SMART" id="SM00204">
    <property type="entry name" value="TGFB"/>
    <property type="match status" value="1"/>
</dbReference>
<dbReference type="SUPFAM" id="SSF57501">
    <property type="entry name" value="Cystine-knot cytokines"/>
    <property type="match status" value="1"/>
</dbReference>
<dbReference type="PROSITE" id="PS00250">
    <property type="entry name" value="TGF_BETA_1"/>
    <property type="match status" value="1"/>
</dbReference>
<dbReference type="PROSITE" id="PS51362">
    <property type="entry name" value="TGF_BETA_2"/>
    <property type="match status" value="1"/>
</dbReference>
<keyword id="KW-0891">Chondrogenesis</keyword>
<keyword id="KW-0165">Cleavage on pair of basic residues</keyword>
<keyword id="KW-0202">Cytokine</keyword>
<keyword id="KW-0217">Developmental protein</keyword>
<keyword id="KW-0221">Differentiation</keyword>
<keyword id="KW-1015">Disulfide bond</keyword>
<keyword id="KW-0325">Glycoprotein</keyword>
<keyword id="KW-0339">Growth factor</keyword>
<keyword id="KW-0892">Osteogenesis</keyword>
<keyword id="KW-1185">Reference proteome</keyword>
<keyword id="KW-0964">Secreted</keyword>
<keyword id="KW-0732">Signal</keyword>
<organism>
    <name type="scientific">Gallus gallus</name>
    <name type="common">Chicken</name>
    <dbReference type="NCBI Taxonomy" id="9031"/>
    <lineage>
        <taxon>Eukaryota</taxon>
        <taxon>Metazoa</taxon>
        <taxon>Chordata</taxon>
        <taxon>Craniata</taxon>
        <taxon>Vertebrata</taxon>
        <taxon>Euteleostomi</taxon>
        <taxon>Archelosauria</taxon>
        <taxon>Archosauria</taxon>
        <taxon>Dinosauria</taxon>
        <taxon>Saurischia</taxon>
        <taxon>Theropoda</taxon>
        <taxon>Coelurosauria</taxon>
        <taxon>Aves</taxon>
        <taxon>Neognathae</taxon>
        <taxon>Galloanserae</taxon>
        <taxon>Galliformes</taxon>
        <taxon>Phasianidae</taxon>
        <taxon>Phasianinae</taxon>
        <taxon>Gallus</taxon>
    </lineage>
</organism>
<gene>
    <name type="primary">BMP4</name>
    <name type="synonym">BMP-4</name>
</gene>
<comment type="function">
    <text evidence="6">Negatively regulates the structure and function of the limb apical ectodermal ridge.</text>
</comment>
<comment type="subunit">
    <text evidence="2 4 5">Homodimer; disulfide-linked. Part of a complex consisting of TWSG1 and CHRD (By similarity). Forms a ternary complex with chordin/CHRD and TSKU (PubMed:15363410, PubMed:16943268).</text>
</comment>
<comment type="subcellular location">
    <subcellularLocation>
        <location evidence="1">Secreted</location>
    </subcellularLocation>
</comment>
<comment type="similarity">
    <text evidence="7">Belongs to the TGF-beta family.</text>
</comment>
<name>BMP4_CHICK</name>
<reference key="1">
    <citation type="journal article" date="1994" name="Development">
        <title>Bone morphogenetic proteins and a signalling pathway that controls patterning in the developing chick limb.</title>
        <authorList>
            <person name="Francis P.H."/>
            <person name="Richardson M.K."/>
            <person name="Brickell P.M."/>
            <person name="Tickle C."/>
        </authorList>
    </citation>
    <scope>NUCLEOTIDE SEQUENCE [MRNA]</scope>
    <source>
        <strain>White leghorn</strain>
    </source>
</reference>
<reference key="2">
    <citation type="journal article" date="1999" name="Development">
        <title>BMPs negatively regulate structure and function of the limb apical ectodermal ridge.</title>
        <authorList>
            <person name="Pizette S."/>
            <person name="Niswander L."/>
        </authorList>
    </citation>
    <scope>FUNCTION</scope>
</reference>
<reference key="3">
    <citation type="journal article" date="2004" name="Dev. Cell">
        <title>Tsukushi functions as an organizer inducer by inhibition of BMP activity in cooperation with chordin.</title>
        <authorList>
            <person name="Ohta K."/>
            <person name="Lupo G."/>
            <person name="Kuriyama S."/>
            <person name="Keynes R."/>
            <person name="Holt C.E."/>
            <person name="Harris W.A."/>
            <person name="Tanaka H."/>
            <person name="Ohnuma S."/>
        </authorList>
    </citation>
    <scope>IDENTIFICATION IN A COMPLEX WITH CHRD AND TSKU</scope>
</reference>
<reference key="4">
    <citation type="journal article" date="2006" name="Development">
        <title>Tsukushi cooperates with VG1 to induce primitive streak and Hensen's node formation in the chick embryo.</title>
        <authorList>
            <person name="Ohta K."/>
            <person name="Kuriyama S."/>
            <person name="Okafuji T."/>
            <person name="Gejima R."/>
            <person name="Ohnuma S."/>
            <person name="Tanaka H."/>
        </authorList>
    </citation>
    <scope>INTERACTION WITH TSKU</scope>
</reference>
<accession>Q90752</accession>
<evidence type="ECO:0000250" key="1"/>
<evidence type="ECO:0000250" key="2">
    <source>
        <dbReference type="UniProtKB" id="P12644"/>
    </source>
</evidence>
<evidence type="ECO:0000255" key="3"/>
<evidence type="ECO:0000269" key="4">
    <source>
    </source>
</evidence>
<evidence type="ECO:0000269" key="5">
    <source>
    </source>
</evidence>
<evidence type="ECO:0000269" key="6">
    <source>
    </source>
</evidence>
<evidence type="ECO:0000305" key="7"/>
<sequence length="405" mass="46057">MIPGNRMLMVILLCQVLLGGTNHASLIPETGRKKVAELQGQAGSGRRSAQSHELLRGFETTLLQMFGLRRRPQPSKSAVIPSYMLDLYRLQSGEEEERSLQEISLQYPERSASRANTVRSFHHEEHLESVPGPSEAPRIRFVFNLSSVPDNEVISSEELRLYREQVEEPSAAWERGFHRINIYEVMKPLSERSQAITRLLDTRLVHHNVTRWETFDVSPAVIRWTKDKQPNHGLVIEVTHLHQAQTHQGKHVRISRSLPQGHGGDWAQLRPLLVTFGHDGRGHALTRRARRSPKHHGSRKNKKNCRRHALYVDFSDVGWNDWIVAPPGYQAFYCHGDCPFPLADHLNSTNHAIVQTLVNSVNSSIPKACCVPTELSAISMLYLDEYDKVVLKNYQEMVVEGCGCR</sequence>
<feature type="signal peptide" evidence="3">
    <location>
        <begin position="1"/>
        <end position="19"/>
    </location>
</feature>
<feature type="propeptide" id="PRO_0000033852" evidence="1">
    <location>
        <begin position="20"/>
        <end position="291"/>
    </location>
</feature>
<feature type="chain" id="PRO_0000033853" description="Bone morphogenetic protein 4">
    <location>
        <begin position="292"/>
        <end position="405"/>
    </location>
</feature>
<feature type="glycosylation site" description="N-linked (GlcNAc...) asparagine" evidence="3">
    <location>
        <position position="144"/>
    </location>
</feature>
<feature type="glycosylation site" description="N-linked (GlcNAc...) asparagine" evidence="3">
    <location>
        <position position="208"/>
    </location>
</feature>
<feature type="glycosylation site" description="N-linked (GlcNAc...) asparagine" evidence="3">
    <location>
        <position position="347"/>
    </location>
</feature>
<feature type="glycosylation site" description="N-linked (GlcNAc...) asparagine" evidence="3">
    <location>
        <position position="362"/>
    </location>
</feature>
<feature type="disulfide bond" evidence="1">
    <location>
        <begin position="305"/>
        <end position="370"/>
    </location>
</feature>
<feature type="disulfide bond" evidence="1">
    <location>
        <begin position="334"/>
        <end position="402"/>
    </location>
</feature>
<feature type="disulfide bond" evidence="1">
    <location>
        <begin position="338"/>
        <end position="404"/>
    </location>
</feature>
<feature type="disulfide bond" description="Interchain" evidence="1">
    <location>
        <position position="369"/>
    </location>
</feature>